<keyword id="KW-0997">Cell inner membrane</keyword>
<keyword id="KW-1003">Cell membrane</keyword>
<keyword id="KW-0378">Hydrolase</keyword>
<keyword id="KW-0472">Membrane</keyword>
<keyword id="KW-0479">Metal-binding</keyword>
<keyword id="KW-0482">Metalloprotease</keyword>
<keyword id="KW-0645">Protease</keyword>
<keyword id="KW-0812">Transmembrane</keyword>
<keyword id="KW-1133">Transmembrane helix</keyword>
<keyword id="KW-0862">Zinc</keyword>
<sequence>MMRILLFLATNMAVMLVLGIILNVTGIAGNSTGGILIMALLFGFAGSLISLFLSKTMALRSVDGEVITQPRNQTERWLIDTVSRQAQKAGIPMPDVAIYHSPDVNAFATGATKSNSLVAVSTGLLNNMTEAEAEAVLAHEISHISNGDMVTMALLQGVLNTFVIFLSRVIATAVASSRNNNGEETRSSGIYFLVSMVLEMLFGVLASIIAMWFSRYREFRADAGSASLVGKEKMIMALQRLQQLHEPQNLEGSLNAFMINGKRSELFMSHPPLEKRIEALRNL</sequence>
<comment type="cofactor">
    <cofactor evidence="1">
        <name>Zn(2+)</name>
        <dbReference type="ChEBI" id="CHEBI:29105"/>
    </cofactor>
    <text evidence="1">Binds 1 zinc ion per subunit.</text>
</comment>
<comment type="subcellular location">
    <subcellularLocation>
        <location evidence="1">Cell inner membrane</location>
        <topology evidence="1">Multi-pass membrane protein</topology>
    </subcellularLocation>
</comment>
<comment type="similarity">
    <text evidence="1">Belongs to the peptidase M48B family.</text>
</comment>
<feature type="chain" id="PRO_1000020867" description="Protease HtpX">
    <location>
        <begin position="1"/>
        <end position="283"/>
    </location>
</feature>
<feature type="transmembrane region" description="Helical" evidence="1">
    <location>
        <begin position="4"/>
        <end position="24"/>
    </location>
</feature>
<feature type="transmembrane region" description="Helical" evidence="1">
    <location>
        <begin position="33"/>
        <end position="53"/>
    </location>
</feature>
<feature type="transmembrane region" description="Helical" evidence="1">
    <location>
        <begin position="147"/>
        <end position="167"/>
    </location>
</feature>
<feature type="transmembrane region" description="Helical" evidence="1">
    <location>
        <begin position="190"/>
        <end position="210"/>
    </location>
</feature>
<feature type="active site" evidence="1">
    <location>
        <position position="140"/>
    </location>
</feature>
<feature type="binding site" evidence="1">
    <location>
        <position position="139"/>
    </location>
    <ligand>
        <name>Zn(2+)</name>
        <dbReference type="ChEBI" id="CHEBI:29105"/>
        <note>catalytic</note>
    </ligand>
</feature>
<feature type="binding site" evidence="1">
    <location>
        <position position="143"/>
    </location>
    <ligand>
        <name>Zn(2+)</name>
        <dbReference type="ChEBI" id="CHEBI:29105"/>
        <note>catalytic</note>
    </ligand>
</feature>
<feature type="binding site" evidence="1">
    <location>
        <position position="218"/>
    </location>
    <ligand>
        <name>Zn(2+)</name>
        <dbReference type="ChEBI" id="CHEBI:29105"/>
        <note>catalytic</note>
    </ligand>
</feature>
<organism>
    <name type="scientific">Haemophilus influenzae (strain 86-028NP)</name>
    <dbReference type="NCBI Taxonomy" id="281310"/>
    <lineage>
        <taxon>Bacteria</taxon>
        <taxon>Pseudomonadati</taxon>
        <taxon>Pseudomonadota</taxon>
        <taxon>Gammaproteobacteria</taxon>
        <taxon>Pasteurellales</taxon>
        <taxon>Pasteurellaceae</taxon>
        <taxon>Haemophilus</taxon>
    </lineage>
</organism>
<evidence type="ECO:0000255" key="1">
    <source>
        <dbReference type="HAMAP-Rule" id="MF_00188"/>
    </source>
</evidence>
<gene>
    <name evidence="1" type="primary">htpX</name>
    <name type="ordered locus">NTHI0852</name>
</gene>
<dbReference type="EC" id="3.4.24.-" evidence="1"/>
<dbReference type="EMBL" id="CP000057">
    <property type="protein sequence ID" value="AAX87748.1"/>
    <property type="molecule type" value="Genomic_DNA"/>
</dbReference>
<dbReference type="SMR" id="Q4QMJ9"/>
<dbReference type="MEROPS" id="M48.002"/>
<dbReference type="KEGG" id="hit:NTHI0852"/>
<dbReference type="HOGENOM" id="CLU_042266_1_0_6"/>
<dbReference type="Proteomes" id="UP000002525">
    <property type="component" value="Chromosome"/>
</dbReference>
<dbReference type="GO" id="GO:0005886">
    <property type="term" value="C:plasma membrane"/>
    <property type="evidence" value="ECO:0007669"/>
    <property type="project" value="UniProtKB-SubCell"/>
</dbReference>
<dbReference type="GO" id="GO:0004222">
    <property type="term" value="F:metalloendopeptidase activity"/>
    <property type="evidence" value="ECO:0007669"/>
    <property type="project" value="UniProtKB-UniRule"/>
</dbReference>
<dbReference type="GO" id="GO:0008270">
    <property type="term" value="F:zinc ion binding"/>
    <property type="evidence" value="ECO:0007669"/>
    <property type="project" value="UniProtKB-UniRule"/>
</dbReference>
<dbReference type="GO" id="GO:0006508">
    <property type="term" value="P:proteolysis"/>
    <property type="evidence" value="ECO:0007669"/>
    <property type="project" value="UniProtKB-KW"/>
</dbReference>
<dbReference type="CDD" id="cd07335">
    <property type="entry name" value="M48B_HtpX_like"/>
    <property type="match status" value="1"/>
</dbReference>
<dbReference type="FunFam" id="3.30.2010.10:FF:000001">
    <property type="entry name" value="Protease HtpX"/>
    <property type="match status" value="1"/>
</dbReference>
<dbReference type="Gene3D" id="3.30.2010.10">
    <property type="entry name" value="Metalloproteases ('zincins'), catalytic domain"/>
    <property type="match status" value="1"/>
</dbReference>
<dbReference type="HAMAP" id="MF_00188">
    <property type="entry name" value="Pept_M48_protease_HtpX"/>
    <property type="match status" value="1"/>
</dbReference>
<dbReference type="InterPro" id="IPR050083">
    <property type="entry name" value="HtpX_protease"/>
</dbReference>
<dbReference type="InterPro" id="IPR022919">
    <property type="entry name" value="Pept_M48_protease_HtpX"/>
</dbReference>
<dbReference type="InterPro" id="IPR001915">
    <property type="entry name" value="Peptidase_M48"/>
</dbReference>
<dbReference type="NCBIfam" id="NF003965">
    <property type="entry name" value="PRK05457.1"/>
    <property type="match status" value="1"/>
</dbReference>
<dbReference type="PANTHER" id="PTHR43221">
    <property type="entry name" value="PROTEASE HTPX"/>
    <property type="match status" value="1"/>
</dbReference>
<dbReference type="PANTHER" id="PTHR43221:SF1">
    <property type="entry name" value="PROTEASE HTPX"/>
    <property type="match status" value="1"/>
</dbReference>
<dbReference type="Pfam" id="PF01435">
    <property type="entry name" value="Peptidase_M48"/>
    <property type="match status" value="1"/>
</dbReference>
<dbReference type="PROSITE" id="PS00142">
    <property type="entry name" value="ZINC_PROTEASE"/>
    <property type="match status" value="1"/>
</dbReference>
<name>HTPX_HAEI8</name>
<proteinExistence type="inferred from homology"/>
<reference key="1">
    <citation type="journal article" date="2005" name="J. Bacteriol.">
        <title>Genomic sequence of an otitis media isolate of nontypeable Haemophilus influenzae: comparative study with H. influenzae serotype d, strain KW20.</title>
        <authorList>
            <person name="Harrison A."/>
            <person name="Dyer D.W."/>
            <person name="Gillaspy A."/>
            <person name="Ray W.C."/>
            <person name="Mungur R."/>
            <person name="Carson M.B."/>
            <person name="Zhong H."/>
            <person name="Gipson J."/>
            <person name="Gipson M."/>
            <person name="Johnson L.S."/>
            <person name="Lewis L."/>
            <person name="Bakaletz L.O."/>
            <person name="Munson R.S. Jr."/>
        </authorList>
    </citation>
    <scope>NUCLEOTIDE SEQUENCE [LARGE SCALE GENOMIC DNA]</scope>
    <source>
        <strain>86-028NP</strain>
    </source>
</reference>
<accession>Q4QMJ9</accession>
<protein>
    <recommendedName>
        <fullName evidence="1">Protease HtpX</fullName>
        <ecNumber evidence="1">3.4.24.-</ecNumber>
    </recommendedName>
    <alternativeName>
        <fullName evidence="1">Heat shock protein HtpX</fullName>
    </alternativeName>
</protein>